<proteinExistence type="evidence at protein level"/>
<protein>
    <recommendedName>
        <fullName>Hypoxanthine-guanine phosphoribosyltransferase</fullName>
        <shortName>HGPRT</shortName>
        <shortName>HGPRTase</shortName>
        <ecNumber evidence="3">2.4.2.8</ecNumber>
    </recommendedName>
</protein>
<sequence>MLEQDIQKILYSENDIIRKTKKLGEQLTKDYQEKNPLMIGVLKGSVPFMAELMKHIDTHVEIDFMVVSSYHGGTSSSGEVKILKDVDTNIEGRDIIIVEDIIDTGRTLKYLRDMFKYRKANTIKIATLFDKPEGRVVKIEADYVCYNIPNEFIVGFGLDYAENYRNLPYVGVLKEEVYSK</sequence>
<feature type="chain" id="PRO_0000139627" description="Hypoxanthine-guanine phosphoribosyltransferase">
    <location>
        <begin position="1"/>
        <end position="180"/>
    </location>
</feature>
<feature type="active site" description="Proton acceptor" evidence="2">
    <location>
        <position position="103"/>
    </location>
</feature>
<feature type="binding site" evidence="3">
    <location>
        <position position="43"/>
    </location>
    <ligand>
        <name>diphosphate</name>
        <dbReference type="ChEBI" id="CHEBI:33019"/>
    </ligand>
</feature>
<feature type="binding site" evidence="3">
    <location>
        <position position="44"/>
    </location>
    <ligand>
        <name>diphosphate</name>
        <dbReference type="ChEBI" id="CHEBI:33019"/>
    </ligand>
</feature>
<feature type="binding site" evidence="3">
    <location>
        <position position="99"/>
    </location>
    <ligand>
        <name>Mg(2+)</name>
        <dbReference type="ChEBI" id="CHEBI:18420"/>
    </ligand>
</feature>
<feature type="binding site" evidence="3">
    <location>
        <position position="100"/>
    </location>
    <ligand>
        <name>Mg(2+)</name>
        <dbReference type="ChEBI" id="CHEBI:18420"/>
    </ligand>
</feature>
<feature type="binding site" evidence="3">
    <location>
        <position position="131"/>
    </location>
    <ligand>
        <name>GMP</name>
        <dbReference type="ChEBI" id="CHEBI:58115"/>
    </ligand>
</feature>
<feature type="binding site" evidence="3">
    <location>
        <begin position="152"/>
        <end position="153"/>
    </location>
    <ligand>
        <name>GMP</name>
        <dbReference type="ChEBI" id="CHEBI:58115"/>
    </ligand>
</feature>
<feature type="binding site" evidence="3">
    <location>
        <position position="159"/>
    </location>
    <ligand>
        <name>GMP</name>
        <dbReference type="ChEBI" id="CHEBI:58115"/>
    </ligand>
</feature>
<feature type="binding site" evidence="3">
    <location>
        <position position="165"/>
    </location>
    <ligand>
        <name>diphosphate</name>
        <dbReference type="ChEBI" id="CHEBI:33019"/>
    </ligand>
</feature>
<organism>
    <name type="scientific">Streptococcus pyogenes serotype M6 (strain ATCC BAA-946 / MGAS10394)</name>
    <dbReference type="NCBI Taxonomy" id="286636"/>
    <lineage>
        <taxon>Bacteria</taxon>
        <taxon>Bacillati</taxon>
        <taxon>Bacillota</taxon>
        <taxon>Bacilli</taxon>
        <taxon>Lactobacillales</taxon>
        <taxon>Streptococcaceae</taxon>
        <taxon>Streptococcus</taxon>
    </lineage>
</organism>
<gene>
    <name type="primary">hpt</name>
    <name type="ordered locus">M6_Spy0012</name>
</gene>
<keyword id="KW-0963">Cytoplasm</keyword>
<keyword id="KW-0903">Direct protein sequencing</keyword>
<keyword id="KW-0328">Glycosyltransferase</keyword>
<keyword id="KW-0460">Magnesium</keyword>
<keyword id="KW-0479">Metal-binding</keyword>
<keyword id="KW-0547">Nucleotide-binding</keyword>
<keyword id="KW-0660">Purine salvage</keyword>
<keyword id="KW-0808">Transferase</keyword>
<reference key="1">
    <citation type="journal article" date="2004" name="J. Infect. Dis.">
        <title>Progress toward characterization of the group A Streptococcus metagenome: complete genome sequence of a macrolide-resistant serotype M6 strain.</title>
        <authorList>
            <person name="Banks D.J."/>
            <person name="Porcella S.F."/>
            <person name="Barbian K.D."/>
            <person name="Beres S.B."/>
            <person name="Philips L.E."/>
            <person name="Voyich J.M."/>
            <person name="DeLeo F.R."/>
            <person name="Martin J.M."/>
            <person name="Somerville G.A."/>
            <person name="Musser J.M."/>
        </authorList>
    </citation>
    <scope>NUCLEOTIDE SEQUENCE [LARGE SCALE GENOMIC DNA]</scope>
    <source>
        <strain>ATCC BAA-946 / MGAS10394</strain>
    </source>
</reference>
<reference key="2">
    <citation type="submission" date="2000-05" db="UniProtKB">
        <title>Two-dimensional gel electrophoresis map of Streptococcus pyogenes proteins.</title>
        <authorList>
            <person name="Hogan D.A."/>
            <person name="Du P."/>
            <person name="Stevenson T.I."/>
            <person name="Whitton M."/>
            <person name="Kilby G.W."/>
            <person name="Rogers J."/>
            <person name="VanBogelen R.A."/>
        </authorList>
    </citation>
    <scope>PROTEIN SEQUENCE OF 9-18; 30-54; 82-106; 110-115 AND 124-135</scope>
    <scope>IDENTIFICATION BY MASS SPECTROMETRY</scope>
    <source>
        <strain>JRS4 / Serotype M6</strain>
    </source>
</reference>
<name>HGPRT_STRP6</name>
<evidence type="ECO:0000250" key="1"/>
<evidence type="ECO:0000250" key="2">
    <source>
        <dbReference type="UniProtKB" id="P0A9M2"/>
    </source>
</evidence>
<evidence type="ECO:0000250" key="3">
    <source>
        <dbReference type="UniProtKB" id="P9WHQ9"/>
    </source>
</evidence>
<evidence type="ECO:0000305" key="4"/>
<accession>Q5XEL6</accession>
<accession>P82548</accession>
<dbReference type="EC" id="2.4.2.8" evidence="3"/>
<dbReference type="EMBL" id="CP000003">
    <property type="protein sequence ID" value="AAT86147.1"/>
    <property type="molecule type" value="Genomic_DNA"/>
</dbReference>
<dbReference type="RefSeq" id="WP_002981912.1">
    <property type="nucleotide sequence ID" value="NC_006086.1"/>
</dbReference>
<dbReference type="SMR" id="Q5XEL6"/>
<dbReference type="GeneID" id="69899963"/>
<dbReference type="KEGG" id="spa:M6_Spy0012"/>
<dbReference type="HOGENOM" id="CLU_073615_0_0_9"/>
<dbReference type="UniPathway" id="UPA00591">
    <property type="reaction ID" value="UER00648"/>
</dbReference>
<dbReference type="UniPathway" id="UPA00909">
    <property type="reaction ID" value="UER00887"/>
</dbReference>
<dbReference type="Proteomes" id="UP000001167">
    <property type="component" value="Chromosome"/>
</dbReference>
<dbReference type="GO" id="GO:0005829">
    <property type="term" value="C:cytosol"/>
    <property type="evidence" value="ECO:0007669"/>
    <property type="project" value="TreeGrafter"/>
</dbReference>
<dbReference type="GO" id="GO:0052657">
    <property type="term" value="F:guanine phosphoribosyltransferase activity"/>
    <property type="evidence" value="ECO:0007669"/>
    <property type="project" value="RHEA"/>
</dbReference>
<dbReference type="GO" id="GO:0004422">
    <property type="term" value="F:hypoxanthine phosphoribosyltransferase activity"/>
    <property type="evidence" value="ECO:0007669"/>
    <property type="project" value="InterPro"/>
</dbReference>
<dbReference type="GO" id="GO:0000287">
    <property type="term" value="F:magnesium ion binding"/>
    <property type="evidence" value="ECO:0007669"/>
    <property type="project" value="TreeGrafter"/>
</dbReference>
<dbReference type="GO" id="GO:0000166">
    <property type="term" value="F:nucleotide binding"/>
    <property type="evidence" value="ECO:0007669"/>
    <property type="project" value="UniProtKB-KW"/>
</dbReference>
<dbReference type="GO" id="GO:0032263">
    <property type="term" value="P:GMP salvage"/>
    <property type="evidence" value="ECO:0007669"/>
    <property type="project" value="UniProtKB-UniPathway"/>
</dbReference>
<dbReference type="GO" id="GO:0006178">
    <property type="term" value="P:guanine salvage"/>
    <property type="evidence" value="ECO:0007669"/>
    <property type="project" value="TreeGrafter"/>
</dbReference>
<dbReference type="GO" id="GO:0046100">
    <property type="term" value="P:hypoxanthine metabolic process"/>
    <property type="evidence" value="ECO:0007669"/>
    <property type="project" value="TreeGrafter"/>
</dbReference>
<dbReference type="GO" id="GO:0032264">
    <property type="term" value="P:IMP salvage"/>
    <property type="evidence" value="ECO:0007669"/>
    <property type="project" value="UniProtKB-UniPathway"/>
</dbReference>
<dbReference type="GO" id="GO:0006166">
    <property type="term" value="P:purine ribonucleoside salvage"/>
    <property type="evidence" value="ECO:0007669"/>
    <property type="project" value="UniProtKB-KW"/>
</dbReference>
<dbReference type="CDD" id="cd06223">
    <property type="entry name" value="PRTases_typeI"/>
    <property type="match status" value="1"/>
</dbReference>
<dbReference type="FunFam" id="3.40.50.2020:FF:000006">
    <property type="entry name" value="Hypoxanthine phosphoribosyltransferase"/>
    <property type="match status" value="1"/>
</dbReference>
<dbReference type="Gene3D" id="3.40.50.2020">
    <property type="match status" value="1"/>
</dbReference>
<dbReference type="InterPro" id="IPR050408">
    <property type="entry name" value="HGPRT"/>
</dbReference>
<dbReference type="InterPro" id="IPR005904">
    <property type="entry name" value="Hxn_phspho_trans"/>
</dbReference>
<dbReference type="InterPro" id="IPR000836">
    <property type="entry name" value="PRibTrfase_dom"/>
</dbReference>
<dbReference type="InterPro" id="IPR029057">
    <property type="entry name" value="PRTase-like"/>
</dbReference>
<dbReference type="NCBIfam" id="TIGR01203">
    <property type="entry name" value="HGPRTase"/>
    <property type="match status" value="1"/>
</dbReference>
<dbReference type="PANTHER" id="PTHR43340:SF1">
    <property type="entry name" value="HYPOXANTHINE PHOSPHORIBOSYLTRANSFERASE"/>
    <property type="match status" value="1"/>
</dbReference>
<dbReference type="PANTHER" id="PTHR43340">
    <property type="entry name" value="HYPOXANTHINE-GUANINE PHOSPHORIBOSYLTRANSFERASE"/>
    <property type="match status" value="1"/>
</dbReference>
<dbReference type="Pfam" id="PF00156">
    <property type="entry name" value="Pribosyltran"/>
    <property type="match status" value="1"/>
</dbReference>
<dbReference type="SUPFAM" id="SSF53271">
    <property type="entry name" value="PRTase-like"/>
    <property type="match status" value="1"/>
</dbReference>
<dbReference type="PROSITE" id="PS00103">
    <property type="entry name" value="PUR_PYR_PR_TRANSFER"/>
    <property type="match status" value="1"/>
</dbReference>
<comment type="function">
    <text evidence="3">Purine salvage pathway enzyme that catalyzes the transfer of the ribosyl-5-phosphate group from 5-phospho-alpha-D-ribose 1-diphosphate (PRPP) to the N9 position of the 6-oxopurines hypoxanthine and guanine to form the corresponding ribonucleotides IMP (inosine 5'-monophosphate) and GMP (guanosine 5'-monophosphate), with the release of PPi.</text>
</comment>
<comment type="catalytic activity">
    <reaction evidence="3">
        <text>IMP + diphosphate = hypoxanthine + 5-phospho-alpha-D-ribose 1-diphosphate</text>
        <dbReference type="Rhea" id="RHEA:17973"/>
        <dbReference type="ChEBI" id="CHEBI:17368"/>
        <dbReference type="ChEBI" id="CHEBI:33019"/>
        <dbReference type="ChEBI" id="CHEBI:58017"/>
        <dbReference type="ChEBI" id="CHEBI:58053"/>
        <dbReference type="EC" id="2.4.2.8"/>
    </reaction>
    <physiologicalReaction direction="right-to-left" evidence="3">
        <dbReference type="Rhea" id="RHEA:17975"/>
    </physiologicalReaction>
</comment>
<comment type="catalytic activity">
    <reaction evidence="3">
        <text>GMP + diphosphate = guanine + 5-phospho-alpha-D-ribose 1-diphosphate</text>
        <dbReference type="Rhea" id="RHEA:25424"/>
        <dbReference type="ChEBI" id="CHEBI:16235"/>
        <dbReference type="ChEBI" id="CHEBI:33019"/>
        <dbReference type="ChEBI" id="CHEBI:58017"/>
        <dbReference type="ChEBI" id="CHEBI:58115"/>
        <dbReference type="EC" id="2.4.2.8"/>
    </reaction>
    <physiologicalReaction direction="right-to-left" evidence="3">
        <dbReference type="Rhea" id="RHEA:25426"/>
    </physiologicalReaction>
</comment>
<comment type="cofactor">
    <cofactor evidence="3">
        <name>Mg(2+)</name>
        <dbReference type="ChEBI" id="CHEBI:18420"/>
    </cofactor>
</comment>
<comment type="pathway">
    <text evidence="3">Purine metabolism; IMP biosynthesis via salvage pathway; IMP from hypoxanthine: step 1/1.</text>
</comment>
<comment type="pathway">
    <text evidence="3">Purine metabolism; GMP biosynthesis via salvage pathway; GMP from guanine: step 1/1.</text>
</comment>
<comment type="subcellular location">
    <subcellularLocation>
        <location evidence="1">Cytoplasm</location>
    </subcellularLocation>
</comment>
<comment type="similarity">
    <text evidence="4">Belongs to the purine/pyrimidine phosphoribosyltransferase family.</text>
</comment>